<accession>Q50LF0</accession>
<keyword id="KW-0002">3D-structure</keyword>
<keyword id="KW-0963">Cytoplasm</keyword>
<keyword id="KW-0520">NAD</keyword>
<keyword id="KW-0547">Nucleotide-binding</keyword>
<keyword id="KW-0560">Oxidoreductase</keyword>
<gene>
    <name evidence="6" type="primary">soxA</name>
</gene>
<name>TSOXA_CORS9</name>
<dbReference type="EC" id="1.5.3.24" evidence="4 8"/>
<dbReference type="EMBL" id="AB186138">
    <property type="protein sequence ID" value="BAD97818.1"/>
    <property type="molecule type" value="Genomic_DNA"/>
</dbReference>
<dbReference type="PDB" id="1VRQ">
    <property type="method" value="X-ray"/>
    <property type="resolution" value="2.20 A"/>
    <property type="chains" value="A=2-965"/>
</dbReference>
<dbReference type="PDB" id="1X31">
    <property type="method" value="X-ray"/>
    <property type="resolution" value="2.15 A"/>
    <property type="chains" value="A=2-965"/>
</dbReference>
<dbReference type="PDB" id="3AD7">
    <property type="method" value="X-ray"/>
    <property type="resolution" value="2.20 A"/>
    <property type="chains" value="A=2-965"/>
</dbReference>
<dbReference type="PDB" id="3AD8">
    <property type="method" value="X-ray"/>
    <property type="resolution" value="2.20 A"/>
    <property type="chains" value="A=2-965"/>
</dbReference>
<dbReference type="PDB" id="3AD9">
    <property type="method" value="X-ray"/>
    <property type="resolution" value="2.30 A"/>
    <property type="chains" value="A=2-965"/>
</dbReference>
<dbReference type="PDB" id="3ADA">
    <property type="method" value="X-ray"/>
    <property type="resolution" value="2.20 A"/>
    <property type="chains" value="A=2-965"/>
</dbReference>
<dbReference type="PDBsum" id="1VRQ"/>
<dbReference type="PDBsum" id="1X31"/>
<dbReference type="PDBsum" id="3AD7"/>
<dbReference type="PDBsum" id="3AD8"/>
<dbReference type="PDBsum" id="3AD9"/>
<dbReference type="PDBsum" id="3ADA"/>
<dbReference type="SMR" id="Q50LF0"/>
<dbReference type="BRENDA" id="1.5.3.1">
    <property type="organism ID" value="10044"/>
</dbReference>
<dbReference type="EvolutionaryTrace" id="Q50LF0"/>
<dbReference type="GO" id="GO:0005737">
    <property type="term" value="C:cytoplasm"/>
    <property type="evidence" value="ECO:0007669"/>
    <property type="project" value="UniProtKB-SubCell"/>
</dbReference>
<dbReference type="GO" id="GO:0000166">
    <property type="term" value="F:nucleotide binding"/>
    <property type="evidence" value="ECO:0007669"/>
    <property type="project" value="UniProtKB-KW"/>
</dbReference>
<dbReference type="GO" id="GO:0008115">
    <property type="term" value="F:sarcosine oxidase activity"/>
    <property type="evidence" value="ECO:0007669"/>
    <property type="project" value="UniProtKB-EC"/>
</dbReference>
<dbReference type="GO" id="GO:0046653">
    <property type="term" value="P:tetrahydrofolate metabolic process"/>
    <property type="evidence" value="ECO:0007669"/>
    <property type="project" value="InterPro"/>
</dbReference>
<dbReference type="Gene3D" id="3.10.20.440">
    <property type="entry name" value="2Fe-2S iron-sulphur cluster binding domain, sarcosine oxidase, alpha subunit, N-terminal domain"/>
    <property type="match status" value="1"/>
</dbReference>
<dbReference type="Gene3D" id="3.50.50.60">
    <property type="entry name" value="FAD/NAD(P)-binding domain"/>
    <property type="match status" value="1"/>
</dbReference>
<dbReference type="Gene3D" id="3.30.1360.120">
    <property type="entry name" value="Probable tRNA modification gtpase trme, domain 1"/>
    <property type="match status" value="1"/>
</dbReference>
<dbReference type="InterPro" id="IPR042204">
    <property type="entry name" value="2Fe-2S-bd_N"/>
</dbReference>
<dbReference type="InterPro" id="IPR036188">
    <property type="entry name" value="FAD/NAD-bd_sf"/>
</dbReference>
<dbReference type="InterPro" id="IPR013977">
    <property type="entry name" value="GCST_C"/>
</dbReference>
<dbReference type="InterPro" id="IPR006222">
    <property type="entry name" value="GCV_T_N"/>
</dbReference>
<dbReference type="InterPro" id="IPR028896">
    <property type="entry name" value="GcvT/YgfZ/DmdA"/>
</dbReference>
<dbReference type="InterPro" id="IPR029043">
    <property type="entry name" value="GcvT/YgfZ_C"/>
</dbReference>
<dbReference type="InterPro" id="IPR006277">
    <property type="entry name" value="Sarcosine_oxidase_asu"/>
</dbReference>
<dbReference type="InterPro" id="IPR041117">
    <property type="entry name" value="SoxA_A3"/>
</dbReference>
<dbReference type="InterPro" id="IPR027266">
    <property type="entry name" value="TrmE/GcvT_dom1"/>
</dbReference>
<dbReference type="NCBIfam" id="TIGR01372">
    <property type="entry name" value="soxA"/>
    <property type="match status" value="1"/>
</dbReference>
<dbReference type="PANTHER" id="PTHR43757">
    <property type="entry name" value="AMINOMETHYLTRANSFERASE"/>
    <property type="match status" value="1"/>
</dbReference>
<dbReference type="PANTHER" id="PTHR43757:SF2">
    <property type="entry name" value="AMINOMETHYLTRANSFERASE, MITOCHONDRIAL"/>
    <property type="match status" value="1"/>
</dbReference>
<dbReference type="Pfam" id="PF12831">
    <property type="entry name" value="FAD_oxidored"/>
    <property type="match status" value="1"/>
</dbReference>
<dbReference type="Pfam" id="PF13510">
    <property type="entry name" value="Fer2_4"/>
    <property type="match status" value="1"/>
</dbReference>
<dbReference type="Pfam" id="PF01571">
    <property type="entry name" value="GCV_T"/>
    <property type="match status" value="1"/>
</dbReference>
<dbReference type="Pfam" id="PF08669">
    <property type="entry name" value="GCV_T_C"/>
    <property type="match status" value="1"/>
</dbReference>
<dbReference type="Pfam" id="PF17806">
    <property type="entry name" value="SO_alpha_A3"/>
    <property type="match status" value="1"/>
</dbReference>
<dbReference type="PIRSF" id="PIRSF037980">
    <property type="entry name" value="SoxA"/>
    <property type="match status" value="1"/>
</dbReference>
<dbReference type="PRINTS" id="PR00368">
    <property type="entry name" value="FADPNR"/>
</dbReference>
<dbReference type="PRINTS" id="PR00411">
    <property type="entry name" value="PNDRDTASEI"/>
</dbReference>
<dbReference type="SUPFAM" id="SSF101790">
    <property type="entry name" value="Aminomethyltransferase beta-barrel domain"/>
    <property type="match status" value="1"/>
</dbReference>
<dbReference type="SUPFAM" id="SSF51905">
    <property type="entry name" value="FAD/NAD(P)-binding domain"/>
    <property type="match status" value="1"/>
</dbReference>
<dbReference type="SUPFAM" id="SSF103025">
    <property type="entry name" value="Folate-binding domain"/>
    <property type="match status" value="1"/>
</dbReference>
<protein>
    <recommendedName>
        <fullName evidence="7">Sarcosine oxidase subunit alpha</fullName>
        <shortName evidence="7">Sarcosine oxidase subunit A</shortName>
        <ecNumber evidence="4 8">1.5.3.24</ecNumber>
    </recommendedName>
    <alternativeName>
        <fullName evidence="7">Sarcosine oxidase (5,10-methylenetetrahydrofolate-forming) subunit alpha</fullName>
    </alternativeName>
    <alternativeName>
        <fullName evidence="7">Tetrameric sarcosine oxidase subunit alpha</fullName>
        <shortName evidence="7">TSOX subunit alpha</shortName>
    </alternativeName>
</protein>
<evidence type="ECO:0000269" key="1">
    <source>
    </source>
</evidence>
<evidence type="ECO:0000269" key="2">
    <source>
    </source>
</evidence>
<evidence type="ECO:0000269" key="3">
    <source>
    </source>
</evidence>
<evidence type="ECO:0000269" key="4">
    <source>
    </source>
</evidence>
<evidence type="ECO:0000269" key="5">
    <source>
    </source>
</evidence>
<evidence type="ECO:0000303" key="6">
    <source>
    </source>
</evidence>
<evidence type="ECO:0000305" key="7"/>
<evidence type="ECO:0000305" key="8">
    <source>
    </source>
</evidence>
<evidence type="ECO:0000305" key="9">
    <source>
    </source>
</evidence>
<evidence type="ECO:0007744" key="10">
    <source>
        <dbReference type="PDB" id="1VRQ"/>
    </source>
</evidence>
<evidence type="ECO:0007744" key="11">
    <source>
        <dbReference type="PDB" id="1X31"/>
    </source>
</evidence>
<evidence type="ECO:0007744" key="12">
    <source>
        <dbReference type="PDB" id="3AD7"/>
    </source>
</evidence>
<evidence type="ECO:0007744" key="13">
    <source>
        <dbReference type="PDB" id="3AD8"/>
    </source>
</evidence>
<evidence type="ECO:0007744" key="14">
    <source>
        <dbReference type="PDB" id="3AD9"/>
    </source>
</evidence>
<evidence type="ECO:0007744" key="15">
    <source>
        <dbReference type="PDB" id="3ADA"/>
    </source>
</evidence>
<evidence type="ECO:0007829" key="16">
    <source>
        <dbReference type="PDB" id="1VRQ"/>
    </source>
</evidence>
<evidence type="ECO:0007829" key="17">
    <source>
        <dbReference type="PDB" id="1X31"/>
    </source>
</evidence>
<evidence type="ECO:0007829" key="18">
    <source>
        <dbReference type="PDB" id="3ADA"/>
    </source>
</evidence>
<proteinExistence type="evidence at protein level"/>
<reference key="1">
    <citation type="journal article" date="2005" name="Biosci. Biotechnol. Biochem.">
        <title>Corynebacterium sp. U-96 contains a cluster of genes of enzymes for the catabolism of sarcosine to pyruvate.</title>
        <authorList>
            <person name="Suzuki H."/>
            <person name="Tamamura R."/>
            <person name="Yajima S."/>
            <person name="Kanno M."/>
            <person name="Suguro M."/>
        </authorList>
    </citation>
    <scope>NUCLEOTIDE SEQUENCE [GENOMIC DNA]</scope>
    <scope>SUBUNIT</scope>
    <source>
        <strain>U-96</strain>
    </source>
</reference>
<reference key="2">
    <citation type="journal article" date="1981" name="J. Biochem.">
        <title>Purification and some properties of sarcosine oxidase from Corynebacterium sp. U-96.</title>
        <authorList>
            <person name="Suzuki M."/>
        </authorList>
    </citation>
    <scope>FUNCTION</scope>
    <scope>CATALYTIC ACTIVITY</scope>
    <scope>ACTIVITY REGULATION</scope>
    <scope>BIOPHYSICOCHEMICAL PROPERTIES</scope>
    <scope>SUBUNIT</scope>
    <source>
        <strain>U-96</strain>
    </source>
</reference>
<reference key="3">
    <citation type="journal article" date="2007" name="J. Biochem.">
        <title>Kinetic studies on the role of Lys-171 and Lys-358 in the beta subunit of sarcosine oxidase from Corynebacterium sp. U-96.</title>
        <authorList>
            <person name="Saito M."/>
            <person name="Kanno M."/>
            <person name="Iizuka H."/>
            <person name="Suzuki H."/>
        </authorList>
    </citation>
    <scope>FUNCTION</scope>
    <scope>CATALYTIC ACTIVITY</scope>
    <scope>BIOPHYSICOCHEMICAL PROPERTIES</scope>
    <source>
        <strain>U-96</strain>
    </source>
</reference>
<reference evidence="10 11" key="4">
    <citation type="journal article" date="2005" name="Biochem. Biophys. Res. Commun.">
        <title>Crystal structure of heterotetrameric sarcosine oxidase from Corynebacterium sp. U-96.</title>
        <authorList>
            <person name="Ida K."/>
            <person name="Moriguchi T."/>
            <person name="Suzuki H."/>
        </authorList>
    </citation>
    <scope>X-RAY CRYSTALLOGRAPHY (2.15 ANGSTROMS) OF 2-965 IN COMPLEX WITH NAD(+) AND 5-FORMYLTETRAHYDROFOLATE</scope>
    <scope>COFACTOR</scope>
    <scope>SUBUNIT</scope>
    <source>
        <strain>U-96</strain>
    </source>
</reference>
<reference evidence="12 13 14 15" key="5">
    <citation type="journal article" date="2010" name="J. Biochem.">
        <title>Channeling and conformational changes in the heterotetrameric sarcosine oxidase from Corynebacterium sp. U-96.</title>
        <authorList>
            <person name="Moriguchi T."/>
            <person name="Ida K."/>
            <person name="Hikima T."/>
            <person name="Ueno G."/>
            <person name="Yamamoto M."/>
            <person name="Suzuki H."/>
        </authorList>
    </citation>
    <scope>X-RAY CRYSTALLOGRAPHY (2.20 ANGSTROMS) OF 2-965 IN COMPLEXES WITH NAD(+)</scope>
    <scope>FUNCTION</scope>
    <scope>CATALYTIC ACTIVITY</scope>
    <scope>REACTION MECHANISM</scope>
    <scope>COFACTOR</scope>
    <scope>BIOPHYSICOCHEMICAL PROPERTIES</scope>
    <scope>SUBUNIT</scope>
    <source>
        <strain>U-96</strain>
    </source>
</reference>
<organism>
    <name type="scientific">Corynebacterium sp. (strain U-96)</name>
    <dbReference type="NCBI Taxonomy" id="31944"/>
    <lineage>
        <taxon>Bacteria</taxon>
        <taxon>Bacillati</taxon>
        <taxon>Actinomycetota</taxon>
        <taxon>Actinomycetes</taxon>
        <taxon>Mycobacteriales</taxon>
        <taxon>Corynebacteriaceae</taxon>
        <taxon>Corynebacterium</taxon>
    </lineage>
</organism>
<sequence length="965" mass="102875">MSKPQRLSAAQTAGARINRDEALTLTVDGQQLSAFRGDTVASAMLANGLRSCGNSMYLDRPRGIFSAGVEEPNALITVGARHQADINESMLPATTVSVTDGLNATLLSGLGVLDPSEDPAYYDHVHVHTDVLVVGAGPAGLAAAREASRSGARVMLLDERPEAGGTLREASGEQIDGIDAAQWIDAVTEELAAAEETTHLQRTTVFGSYDANYILAAQRRTVHLDGPSGQGVSRERIWHIRAKQVVLATAAHERPIVFENNDRPGIMLAGSVRSYLNRFGVRAGSKIAVATTNDSVYPLVSELAASGGVVAVIDARQNISAAAAQAVTDGVTVLTGSVVANTEADASGELSAVLVATLDEQRNLGEAQRFEADVLAVSGGFNPVVHLHSQRQGKLNWDTSIHAFVPADAVANQHLAGALTGLLDTASALSTGAATGAAAASAAGFEKIAEVPQALAVPAGETRPVWLVPSLSGDDAVHYKFHFVDLQRDQTVADVLRATGAGMQSVEHIKRYTSISTANDQGKTSGVAAIGVIAAVLGIENPAQIGTTTFRAPYTPVSFAALAGRTRGELLDPARLTAMHPWHLAHGAKFEDVGQWKRPWYYPQDGESMDEAVYRECKAVRDSVGMLDASTLGKIEIRGKDAAEFLNRMYTNGYTKLKVGMGRYGVMCKADGMIFDDGVTLRLAEDRFLMHTTTGGAADVLDWLEEWLQTEWPELDVTCTSVTEQLATVAVVGPRSRDVIAKLASSLDVSNDAFKFMAFQDVTLDSGIEARISRISFSGELAFEIAIPAWHGLQVWEDVYAAGQEFNITPYGTETMHVLRAEKGFIIVGQDTDGTVTPQDAGMEWVVSKLKDFVGKRSFSREDNVREDRKHLVSVLPVDSSLRLAEGAALVAADAVASEGVTPMEGWVTHAYNSPALGRTFGLALIKNGRNRIGEVLKTPVDGQLVDVQVSDLVLFDPEGSRRDG</sequence>
<feature type="chain" id="PRO_0000459101" description="Sarcosine oxidase subunit alpha">
    <location>
        <begin position="1"/>
        <end position="965"/>
    </location>
</feature>
<feature type="binding site" evidence="2 4 10 11 12 13 14 15">
    <location>
        <position position="139"/>
    </location>
    <ligand>
        <name>NAD(+)</name>
        <dbReference type="ChEBI" id="CHEBI:57540"/>
    </ligand>
</feature>
<feature type="binding site" evidence="2 4 10 11 12 13 14 15">
    <location>
        <position position="158"/>
    </location>
    <ligand>
        <name>NAD(+)</name>
        <dbReference type="ChEBI" id="CHEBI:57540"/>
    </ligand>
</feature>
<feature type="binding site" evidence="2 4 10 11 12 13 14 15">
    <location>
        <position position="159"/>
    </location>
    <ligand>
        <name>NAD(+)</name>
        <dbReference type="ChEBI" id="CHEBI:57540"/>
    </ligand>
</feature>
<feature type="binding site" evidence="2 4 10 11 12 13 14 15">
    <location>
        <position position="160"/>
    </location>
    <ligand>
        <name>NAD(+)</name>
        <dbReference type="ChEBI" id="CHEBI:57540"/>
    </ligand>
</feature>
<feature type="binding site" evidence="2 4 10 11 12 13 14 15">
    <location>
        <position position="166"/>
    </location>
    <ligand>
        <name>NAD(+)</name>
        <dbReference type="ChEBI" id="CHEBI:57540"/>
    </ligand>
</feature>
<feature type="binding site" evidence="2 4 10 11 12 13 14 15">
    <location>
        <position position="205"/>
    </location>
    <ligand>
        <name>NAD(+)</name>
        <dbReference type="ChEBI" id="CHEBI:57540"/>
    </ligand>
</feature>
<feature type="binding site" evidence="2 4 10 11 12 13 14 15">
    <location>
        <position position="418"/>
    </location>
    <ligand>
        <name>NAD(+)</name>
        <dbReference type="ChEBI" id="CHEBI:57540"/>
    </ligand>
</feature>
<feature type="binding site" evidence="2 4 10 11 12 13 14 15">
    <location>
        <position position="423"/>
    </location>
    <ligand>
        <name>NAD(+)</name>
        <dbReference type="ChEBI" id="CHEBI:57540"/>
    </ligand>
</feature>
<feature type="binding site" evidence="2 4 10 11 12 13 14 15">
    <location>
        <position position="425"/>
    </location>
    <ligand>
        <name>NAD(+)</name>
        <dbReference type="ChEBI" id="CHEBI:57540"/>
    </ligand>
</feature>
<feature type="binding site" evidence="9 10">
    <location>
        <position position="692"/>
    </location>
    <ligand>
        <name>(6R)-5,10-methylene-5,6,7,8-tetrahydrofolate</name>
        <dbReference type="ChEBI" id="CHEBI:15636"/>
    </ligand>
</feature>
<feature type="binding site" evidence="9 10">
    <location>
        <position position="784"/>
    </location>
    <ligand>
        <name>(6R)-5,10-methylene-5,6,7,8-tetrahydrofolate</name>
        <dbReference type="ChEBI" id="CHEBI:15636"/>
    </ligand>
</feature>
<feature type="turn" evidence="17">
    <location>
        <begin position="9"/>
        <end position="14"/>
    </location>
</feature>
<feature type="strand" evidence="17">
    <location>
        <begin position="16"/>
        <end position="27"/>
    </location>
</feature>
<feature type="strand" evidence="17">
    <location>
        <begin position="30"/>
        <end position="36"/>
    </location>
</feature>
<feature type="helix" evidence="17">
    <location>
        <begin position="40"/>
        <end position="46"/>
    </location>
</feature>
<feature type="turn" evidence="17">
    <location>
        <begin position="56"/>
        <end position="58"/>
    </location>
</feature>
<feature type="strand" evidence="17">
    <location>
        <begin position="75"/>
        <end position="78"/>
    </location>
</feature>
<feature type="strand" evidence="17">
    <location>
        <begin position="88"/>
        <end position="92"/>
    </location>
</feature>
<feature type="turn" evidence="16">
    <location>
        <begin position="93"/>
        <end position="95"/>
    </location>
</feature>
<feature type="strand" evidence="17">
    <location>
        <begin position="102"/>
        <end position="106"/>
    </location>
</feature>
<feature type="strand" evidence="17">
    <location>
        <begin position="122"/>
        <end position="134"/>
    </location>
</feature>
<feature type="helix" evidence="17">
    <location>
        <begin position="138"/>
        <end position="149"/>
    </location>
</feature>
<feature type="strand" evidence="17">
    <location>
        <begin position="154"/>
        <end position="157"/>
    </location>
</feature>
<feature type="strand" evidence="17">
    <location>
        <begin position="159"/>
        <end position="163"/>
    </location>
</feature>
<feature type="helix" evidence="17">
    <location>
        <begin position="165"/>
        <end position="169"/>
    </location>
</feature>
<feature type="helix" evidence="17">
    <location>
        <begin position="180"/>
        <end position="193"/>
    </location>
</feature>
<feature type="strand" evidence="17">
    <location>
        <begin position="197"/>
        <end position="209"/>
    </location>
</feature>
<feature type="turn" evidence="17">
    <location>
        <begin position="210"/>
        <end position="212"/>
    </location>
</feature>
<feature type="strand" evidence="17">
    <location>
        <begin position="213"/>
        <end position="219"/>
    </location>
</feature>
<feature type="strand" evidence="17">
    <location>
        <begin position="234"/>
        <end position="247"/>
    </location>
</feature>
<feature type="strand" evidence="17">
    <location>
        <begin position="251"/>
        <end position="253"/>
    </location>
</feature>
<feature type="turn" evidence="17">
    <location>
        <begin position="260"/>
        <end position="262"/>
    </location>
</feature>
<feature type="strand" evidence="17">
    <location>
        <begin position="266"/>
        <end position="268"/>
    </location>
</feature>
<feature type="helix" evidence="17">
    <location>
        <begin position="269"/>
        <end position="279"/>
    </location>
</feature>
<feature type="strand" evidence="17">
    <location>
        <begin position="281"/>
        <end position="283"/>
    </location>
</feature>
<feature type="strand" evidence="17">
    <location>
        <begin position="285"/>
        <end position="293"/>
    </location>
</feature>
<feature type="helix" evidence="17">
    <location>
        <begin position="294"/>
        <end position="296"/>
    </location>
</feature>
<feature type="helix" evidence="17">
    <location>
        <begin position="297"/>
        <end position="303"/>
    </location>
</feature>
<feature type="helix" evidence="17">
    <location>
        <begin position="304"/>
        <end position="306"/>
    </location>
</feature>
<feature type="strand" evidence="17">
    <location>
        <begin position="310"/>
        <end position="314"/>
    </location>
</feature>
<feature type="strand" evidence="17">
    <location>
        <begin position="316"/>
        <end position="318"/>
    </location>
</feature>
<feature type="helix" evidence="17">
    <location>
        <begin position="321"/>
        <end position="328"/>
    </location>
</feature>
<feature type="strand" evidence="17">
    <location>
        <begin position="337"/>
        <end position="344"/>
    </location>
</feature>
<feature type="strand" evidence="17">
    <location>
        <begin position="348"/>
        <end position="358"/>
    </location>
</feature>
<feature type="strand" evidence="17">
    <location>
        <begin position="368"/>
        <end position="371"/>
    </location>
</feature>
<feature type="strand" evidence="17">
    <location>
        <begin position="373"/>
        <end position="378"/>
    </location>
</feature>
<feature type="strand" evidence="17">
    <location>
        <begin position="381"/>
        <end position="383"/>
    </location>
</feature>
<feature type="helix" evidence="17">
    <location>
        <begin position="386"/>
        <end position="390"/>
    </location>
</feature>
<feature type="strand" evidence="17">
    <location>
        <begin position="395"/>
        <end position="398"/>
    </location>
</feature>
<feature type="turn" evidence="17">
    <location>
        <begin position="399"/>
        <end position="402"/>
    </location>
</feature>
<feature type="strand" evidence="17">
    <location>
        <begin position="403"/>
        <end position="406"/>
    </location>
</feature>
<feature type="strand" evidence="17">
    <location>
        <begin position="413"/>
        <end position="415"/>
    </location>
</feature>
<feature type="helix" evidence="17">
    <location>
        <begin position="417"/>
        <end position="420"/>
    </location>
</feature>
<feature type="helix" evidence="17">
    <location>
        <begin position="425"/>
        <end position="442"/>
    </location>
</feature>
<feature type="strand" evidence="17">
    <location>
        <begin position="473"/>
        <end position="475"/>
    </location>
</feature>
<feature type="helix" evidence="17">
    <location>
        <begin position="476"/>
        <end position="479"/>
    </location>
</feature>
<feature type="strand" evidence="17">
    <location>
        <begin position="482"/>
        <end position="485"/>
    </location>
</feature>
<feature type="turn" evidence="17">
    <location>
        <begin position="486"/>
        <end position="489"/>
    </location>
</feature>
<feature type="helix" evidence="17">
    <location>
        <begin position="492"/>
        <end position="500"/>
    </location>
</feature>
<feature type="helix" evidence="17">
    <location>
        <begin position="506"/>
        <end position="513"/>
    </location>
</feature>
<feature type="turn" evidence="17">
    <location>
        <begin position="519"/>
        <end position="525"/>
    </location>
</feature>
<feature type="helix" evidence="17">
    <location>
        <begin position="526"/>
        <end position="536"/>
    </location>
</feature>
<feature type="helix" evidence="17">
    <location>
        <begin position="542"/>
        <end position="545"/>
    </location>
</feature>
<feature type="helix" evidence="17">
    <location>
        <begin position="559"/>
        <end position="563"/>
    </location>
</feature>
<feature type="helix" evidence="17">
    <location>
        <begin position="568"/>
        <end position="571"/>
    </location>
</feature>
<feature type="helix" evidence="17">
    <location>
        <begin position="580"/>
        <end position="585"/>
    </location>
</feature>
<feature type="strand" evidence="17">
    <location>
        <begin position="589"/>
        <end position="593"/>
    </location>
</feature>
<feature type="strand" evidence="17">
    <location>
        <begin position="596"/>
        <end position="601"/>
    </location>
</feature>
<feature type="helix" evidence="17">
    <location>
        <begin position="609"/>
        <end position="622"/>
    </location>
</feature>
<feature type="strand" evidence="17">
    <location>
        <begin position="625"/>
        <end position="628"/>
    </location>
</feature>
<feature type="strand" evidence="17">
    <location>
        <begin position="632"/>
        <end position="639"/>
    </location>
</feature>
<feature type="helix" evidence="17">
    <location>
        <begin position="642"/>
        <end position="649"/>
    </location>
</feature>
<feature type="strand" evidence="17">
    <location>
        <begin position="650"/>
        <end position="652"/>
    </location>
</feature>
<feature type="strand" evidence="17">
    <location>
        <begin position="661"/>
        <end position="668"/>
    </location>
</feature>
<feature type="strand" evidence="17">
    <location>
        <begin position="674"/>
        <end position="684"/>
    </location>
</feature>
<feature type="strand" evidence="17">
    <location>
        <begin position="687"/>
        <end position="692"/>
    </location>
</feature>
<feature type="helix" evidence="17">
    <location>
        <begin position="694"/>
        <end position="696"/>
    </location>
</feature>
<feature type="helix" evidence="17">
    <location>
        <begin position="697"/>
        <end position="710"/>
    </location>
</feature>
<feature type="strand" evidence="17">
    <location>
        <begin position="718"/>
        <end position="721"/>
    </location>
</feature>
<feature type="turn" evidence="17">
    <location>
        <begin position="723"/>
        <end position="725"/>
    </location>
</feature>
<feature type="strand" evidence="17">
    <location>
        <begin position="726"/>
        <end position="733"/>
    </location>
</feature>
<feature type="helix" evidence="17">
    <location>
        <begin position="736"/>
        <end position="743"/>
    </location>
</feature>
<feature type="turn" evidence="17">
    <location>
        <begin position="751"/>
        <end position="753"/>
    </location>
</feature>
<feature type="strand" evidence="17">
    <location>
        <begin position="758"/>
        <end position="763"/>
    </location>
</feature>
<feature type="strand" evidence="17">
    <location>
        <begin position="769"/>
        <end position="773"/>
    </location>
</feature>
<feature type="strand" evidence="17">
    <location>
        <begin position="777"/>
        <end position="780"/>
    </location>
</feature>
<feature type="strand" evidence="17">
    <location>
        <begin position="782"/>
        <end position="788"/>
    </location>
</feature>
<feature type="helix" evidence="17">
    <location>
        <begin position="789"/>
        <end position="791"/>
    </location>
</feature>
<feature type="helix" evidence="17">
    <location>
        <begin position="792"/>
        <end position="802"/>
    </location>
</feature>
<feature type="helix" evidence="17">
    <location>
        <begin position="804"/>
        <end position="806"/>
    </location>
</feature>
<feature type="helix" evidence="17">
    <location>
        <begin position="813"/>
        <end position="822"/>
    </location>
</feature>
<feature type="turn" evidence="17">
    <location>
        <begin position="828"/>
        <end position="830"/>
    </location>
</feature>
<feature type="turn" evidence="17">
    <location>
        <begin position="838"/>
        <end position="842"/>
    </location>
</feature>
<feature type="helix" evidence="17">
    <location>
        <begin position="844"/>
        <end position="846"/>
    </location>
</feature>
<feature type="strand" evidence="17">
    <location>
        <begin position="849"/>
        <end position="851"/>
    </location>
</feature>
<feature type="helix" evidence="17">
    <location>
        <begin position="856"/>
        <end position="860"/>
    </location>
</feature>
<feature type="helix" evidence="17">
    <location>
        <begin position="863"/>
        <end position="865"/>
    </location>
</feature>
<feature type="strand" evidence="17">
    <location>
        <begin position="871"/>
        <end position="879"/>
    </location>
</feature>
<feature type="strand" evidence="17">
    <location>
        <begin position="889"/>
        <end position="892"/>
    </location>
</feature>
<feature type="strand" evidence="17">
    <location>
        <begin position="906"/>
        <end position="914"/>
    </location>
</feature>
<feature type="turn" evidence="17">
    <location>
        <begin position="915"/>
        <end position="918"/>
    </location>
</feature>
<feature type="strand" evidence="17">
    <location>
        <begin position="919"/>
        <end position="926"/>
    </location>
</feature>
<feature type="helix" evidence="17">
    <location>
        <begin position="929"/>
        <end position="931"/>
    </location>
</feature>
<feature type="strand" evidence="17">
    <location>
        <begin position="936"/>
        <end position="941"/>
    </location>
</feature>
<feature type="strand" evidence="17">
    <location>
        <begin position="944"/>
        <end position="951"/>
    </location>
</feature>
<feature type="helix" evidence="18">
    <location>
        <begin position="961"/>
        <end position="963"/>
    </location>
</feature>
<comment type="function">
    <text evidence="3 4 5 8">In the presence of tetrahydrofolate, catalyzes the oxidative demethylation of sarcosine to yield glycine, 5,10-methylenetetrahydrofolate and hydrogen peroxide (PubMed:20675294). In the absence of tetrahydrofolate, catalyzes the oxidative demethylation of sarcosine to yield glycine, formaldehyde and hydrogen peroxide (PubMed:17395614, PubMed:20675294, PubMed:7240129). Can also use N-methyl-L-alanine and N-ethyl-L-glycine (PubMed:7240129). Is very specific for oxygen as an acceptor (PubMed:7240129).</text>
</comment>
<comment type="catalytic activity">
    <reaction evidence="4 8">
        <text>sarcosine + (6S)-5,6,7,8-tetrahydrofolate + O2 = (6R)-5,10-methylene-5,6,7,8-tetrahydrofolate + glycine + H2O2</text>
        <dbReference type="Rhea" id="RHEA:70455"/>
        <dbReference type="ChEBI" id="CHEBI:15379"/>
        <dbReference type="ChEBI" id="CHEBI:15636"/>
        <dbReference type="ChEBI" id="CHEBI:16240"/>
        <dbReference type="ChEBI" id="CHEBI:57305"/>
        <dbReference type="ChEBI" id="CHEBI:57433"/>
        <dbReference type="ChEBI" id="CHEBI:57453"/>
        <dbReference type="EC" id="1.5.3.24"/>
    </reaction>
</comment>
<comment type="catalytic activity">
    <reaction evidence="3 4 5">
        <text>sarcosine + O2 + H2O = formaldehyde + glycine + H2O2</text>
        <dbReference type="Rhea" id="RHEA:13313"/>
        <dbReference type="ChEBI" id="CHEBI:15377"/>
        <dbReference type="ChEBI" id="CHEBI:15379"/>
        <dbReference type="ChEBI" id="CHEBI:16240"/>
        <dbReference type="ChEBI" id="CHEBI:16842"/>
        <dbReference type="ChEBI" id="CHEBI:57305"/>
        <dbReference type="ChEBI" id="CHEBI:57433"/>
    </reaction>
</comment>
<comment type="cofactor">
    <cofactor evidence="2 4">
        <name>NAD(+)</name>
        <dbReference type="ChEBI" id="CHEBI:57540"/>
    </cofactor>
    <text evidence="2 4">Binds 1 NAD(+) per subunit.</text>
</comment>
<comment type="activity regulation">
    <text evidence="5">Inhibited by Zn(2+), Cu(2+), Cd(2+), Hg(2+), Ag(+), p-chloromercuribenzoate (p-CMB), iodoacetamide, N-ethylmaleimide, CN(-), o-phenanthroline and sodium lauryl sulfate.</text>
</comment>
<comment type="biophysicochemical properties">
    <kinetics>
        <KM evidence="5">3.4 mM for sarcosine (at pH 8.3)</KM>
        <KM evidence="5">3.8 mM for sarcosine (at pH 7.0)</KM>
        <KM evidence="3">2.8 mM for sarcosine (at pH 8.0 and 25 degrees Celsius)</KM>
        <KM evidence="4">1.4 mM for sarcosine (at pH 8.0 and 25 degrees Celsius)</KM>
        <KM evidence="5">8.7 mM for N-methyl-L-alanine (at pH 8.3)</KM>
        <KM evidence="5">12.4 mM for N-methyl-L-alanine (at pH 7.0)</KM>
        <KM evidence="5">11.4 mM for N-ethyl-L-glycine (at pH 7.0)</KM>
        <KM evidence="5">0.13 mM for oxygen</KM>
        <KM evidence="3">17.6 uM for oxygen (at pH 8.0 and 25 degrees Celsius)</KM>
        <Vmax evidence="5">12.81 umol/min/mg enzyme toward oxygen</Vmax>
        <text evidence="4 5">kcat is 5.8 sec(-1) with sarcosine as substrate (at pH 8.3). kcat is 3.0 sec(-1) with sarcosine as substrate (at pH 7.0). kcat is 2.1 sec(-1) with N-methyl-L-alanine as substrate (at pH 8.3). kcat is 1.8 sec(-1) with N-methyl-L-alanine as substrate (at pH 7.0). kcat is 2.2 sec(-1) with N-ethyl-L-glycine as substrate (at pH 7.0) (PubMed:7240129). kcat is 17.5 sec(-1) with sarcosine as substrate (at pH 8.0 and 25 degrees Celsius, in the absence of tetrahydrofolate) (PubMed:20675294).</text>
    </kinetics>
    <phDependence>
        <text evidence="5">Optimum pH is 7.7 in potassium phosphate buffer and 8.0-8.5 in glycylglycine buffer.</text>
    </phDependence>
    <temperatureDependence>
        <text evidence="5">Optimum temperature is 37 degrees Celsius.</text>
    </temperatureDependence>
</comment>
<comment type="subunit">
    <text evidence="1 2 4 5">Heterotetramer composed of subunits alpha (SoxA), beta (SoxB), gamma (SoxG) and delta (SoxD).</text>
</comment>
<comment type="subcellular location">
    <subcellularLocation>
        <location evidence="7">Cytoplasm</location>
    </subcellularLocation>
</comment>
<comment type="similarity">
    <text evidence="7">Belongs to the GcvT family.</text>
</comment>